<gene>
    <name type="primary">alr1</name>
    <name type="synonym">alr</name>
    <name type="synonym">dal</name>
    <name type="ordered locus">BSU04640</name>
</gene>
<proteinExistence type="inferred from homology"/>
<evidence type="ECO:0000255" key="1">
    <source>
        <dbReference type="HAMAP-Rule" id="MF_01201"/>
    </source>
</evidence>
<evidence type="ECO:0000305" key="2"/>
<dbReference type="EC" id="5.1.1.1" evidence="1"/>
<dbReference type="EMBL" id="M16207">
    <property type="protein sequence ID" value="AAA22378.1"/>
    <property type="molecule type" value="Genomic_DNA"/>
</dbReference>
<dbReference type="EMBL" id="AB001488">
    <property type="protein sequence ID" value="BAA19301.1"/>
    <property type="molecule type" value="Genomic_DNA"/>
</dbReference>
<dbReference type="EMBL" id="AL009126">
    <property type="protein sequence ID" value="CAB12271.1"/>
    <property type="molecule type" value="Genomic_DNA"/>
</dbReference>
<dbReference type="PIR" id="JS0443">
    <property type="entry name" value="JS0443"/>
</dbReference>
<dbReference type="RefSeq" id="WP_003234284.1">
    <property type="nucleotide sequence ID" value="NZ_OZ025638.1"/>
</dbReference>
<dbReference type="SMR" id="P10725"/>
<dbReference type="FunCoup" id="P10725">
    <property type="interactions" value="386"/>
</dbReference>
<dbReference type="STRING" id="224308.BSU04640"/>
<dbReference type="jPOST" id="P10725"/>
<dbReference type="PaxDb" id="224308-BSU04640"/>
<dbReference type="EnsemblBacteria" id="CAB12271">
    <property type="protein sequence ID" value="CAB12271"/>
    <property type="gene ID" value="BSU_04640"/>
</dbReference>
<dbReference type="GeneID" id="939942"/>
<dbReference type="KEGG" id="bsu:BSU04640"/>
<dbReference type="PATRIC" id="fig|224308.179.peg.492"/>
<dbReference type="eggNOG" id="COG0787">
    <property type="taxonomic scope" value="Bacteria"/>
</dbReference>
<dbReference type="InParanoid" id="P10725"/>
<dbReference type="OrthoDB" id="9813814at2"/>
<dbReference type="PhylomeDB" id="P10725"/>
<dbReference type="BioCyc" id="BSUB:BSU04640-MONOMER"/>
<dbReference type="BRENDA" id="5.1.1.1">
    <property type="organism ID" value="658"/>
</dbReference>
<dbReference type="SABIO-RK" id="P10725"/>
<dbReference type="UniPathway" id="UPA00042">
    <property type="reaction ID" value="UER00497"/>
</dbReference>
<dbReference type="Proteomes" id="UP000001570">
    <property type="component" value="Chromosome"/>
</dbReference>
<dbReference type="GO" id="GO:0005829">
    <property type="term" value="C:cytosol"/>
    <property type="evidence" value="ECO:0000318"/>
    <property type="project" value="GO_Central"/>
</dbReference>
<dbReference type="GO" id="GO:0008784">
    <property type="term" value="F:alanine racemase activity"/>
    <property type="evidence" value="ECO:0000318"/>
    <property type="project" value="GO_Central"/>
</dbReference>
<dbReference type="GO" id="GO:0030170">
    <property type="term" value="F:pyridoxal phosphate binding"/>
    <property type="evidence" value="ECO:0000318"/>
    <property type="project" value="GO_Central"/>
</dbReference>
<dbReference type="GO" id="GO:0030632">
    <property type="term" value="P:D-alanine biosynthetic process"/>
    <property type="evidence" value="ECO:0000318"/>
    <property type="project" value="GO_Central"/>
</dbReference>
<dbReference type="GO" id="GO:0009252">
    <property type="term" value="P:peptidoglycan biosynthetic process"/>
    <property type="evidence" value="ECO:0000318"/>
    <property type="project" value="GO_Central"/>
</dbReference>
<dbReference type="CDD" id="cd00430">
    <property type="entry name" value="PLPDE_III_AR"/>
    <property type="match status" value="1"/>
</dbReference>
<dbReference type="FunFam" id="2.40.37.10:FF:000006">
    <property type="entry name" value="Alanine racemase"/>
    <property type="match status" value="1"/>
</dbReference>
<dbReference type="FunFam" id="3.20.20.10:FF:000002">
    <property type="entry name" value="Alanine racemase"/>
    <property type="match status" value="1"/>
</dbReference>
<dbReference type="Gene3D" id="3.20.20.10">
    <property type="entry name" value="Alanine racemase"/>
    <property type="match status" value="1"/>
</dbReference>
<dbReference type="Gene3D" id="2.40.37.10">
    <property type="entry name" value="Lyase, Ornithine Decarboxylase, Chain A, domain 1"/>
    <property type="match status" value="1"/>
</dbReference>
<dbReference type="HAMAP" id="MF_01201">
    <property type="entry name" value="Ala_racemase"/>
    <property type="match status" value="1"/>
</dbReference>
<dbReference type="InterPro" id="IPR000821">
    <property type="entry name" value="Ala_racemase"/>
</dbReference>
<dbReference type="InterPro" id="IPR009006">
    <property type="entry name" value="Ala_racemase/Decarboxylase_C"/>
</dbReference>
<dbReference type="InterPro" id="IPR011079">
    <property type="entry name" value="Ala_racemase_C"/>
</dbReference>
<dbReference type="InterPro" id="IPR001608">
    <property type="entry name" value="Ala_racemase_N"/>
</dbReference>
<dbReference type="InterPro" id="IPR020622">
    <property type="entry name" value="Ala_racemase_pyridoxalP-BS"/>
</dbReference>
<dbReference type="InterPro" id="IPR029066">
    <property type="entry name" value="PLP-binding_barrel"/>
</dbReference>
<dbReference type="NCBIfam" id="TIGR00492">
    <property type="entry name" value="alr"/>
    <property type="match status" value="1"/>
</dbReference>
<dbReference type="PANTHER" id="PTHR30511">
    <property type="entry name" value="ALANINE RACEMASE"/>
    <property type="match status" value="1"/>
</dbReference>
<dbReference type="PANTHER" id="PTHR30511:SF0">
    <property type="entry name" value="ALANINE RACEMASE, CATABOLIC-RELATED"/>
    <property type="match status" value="1"/>
</dbReference>
<dbReference type="Pfam" id="PF00842">
    <property type="entry name" value="Ala_racemase_C"/>
    <property type="match status" value="1"/>
</dbReference>
<dbReference type="Pfam" id="PF01168">
    <property type="entry name" value="Ala_racemase_N"/>
    <property type="match status" value="1"/>
</dbReference>
<dbReference type="PRINTS" id="PR00992">
    <property type="entry name" value="ALARACEMASE"/>
</dbReference>
<dbReference type="SMART" id="SM01005">
    <property type="entry name" value="Ala_racemase_C"/>
    <property type="match status" value="1"/>
</dbReference>
<dbReference type="SUPFAM" id="SSF50621">
    <property type="entry name" value="Alanine racemase C-terminal domain-like"/>
    <property type="match status" value="1"/>
</dbReference>
<dbReference type="SUPFAM" id="SSF51419">
    <property type="entry name" value="PLP-binding barrel"/>
    <property type="match status" value="1"/>
</dbReference>
<dbReference type="PROSITE" id="PS00395">
    <property type="entry name" value="ALANINE_RACEMASE"/>
    <property type="match status" value="1"/>
</dbReference>
<feature type="chain" id="PRO_0000114500" description="Alanine racemase 1">
    <location>
        <begin position="1"/>
        <end position="389"/>
    </location>
</feature>
<feature type="active site" description="Proton acceptor; specific for D-alanine" evidence="1">
    <location>
        <position position="41"/>
    </location>
</feature>
<feature type="active site" description="Proton acceptor; specific for L-alanine" evidence="1">
    <location>
        <position position="266"/>
    </location>
</feature>
<feature type="binding site" evidence="1">
    <location>
        <position position="137"/>
    </location>
    <ligand>
        <name>substrate</name>
    </ligand>
</feature>
<feature type="binding site" evidence="1">
    <location>
        <position position="313"/>
    </location>
    <ligand>
        <name>substrate</name>
    </ligand>
</feature>
<feature type="modified residue" description="N6-(pyridoxal phosphate)lysine" evidence="1">
    <location>
        <position position="41"/>
    </location>
</feature>
<feature type="sequence conflict" description="In Ref. 1; AAA22378." evidence="2" ref="1">
    <original>V</original>
    <variation>E</variation>
    <location>
        <position position="40"/>
    </location>
</feature>
<feature type="sequence conflict" description="In Ref. 1; AAA22378." evidence="2" ref="1">
    <original>V</original>
    <variation>M</variation>
    <location>
        <position position="66"/>
    </location>
</feature>
<sequence length="389" mass="43265">MSTKPFYRDTWAEIDLSAIKENVSNMKKHIGEHVHLMAVVKANAYGHGDAETAKAALDAGASCLAVAILDEAISLRKKGLKAPILVLGAVPPEYVAIAAEYDVTLTGYSVEWLQEAARHTKKGSLHFHLKVDTGMNRLGVKTEEEVQNVMAILDRNPRLKCKGVFTHFATADEKERGYFLMQFERFKELIAPLPLKNLMVHCANSAAGLRLKKGFFNAVRFGIGMYGLRPSADMSDEIPFQLRPAFTLHSTLSHVKLIRKGESVSYGAEYTAEKDTWIGTVPVGYADGWLRKLKGTDILVKGKRLKIAGRICMDQFMVELDQEYPPGTKVTLIGRQGDEYISMDEIAGRLETINYEVACTISSRVPRMFLENGSIMEVRNPLLQVNISN</sequence>
<name>ALR1_BACSU</name>
<reference key="1">
    <citation type="journal article" date="1985" name="Biotechnology (N.Y.)">
        <title>Isolation of an alanine racemase gene from Bacillus subtilis and its use for plasmid maintenance in B. subtilis.</title>
        <authorList>
            <person name="Ferrari E."/>
            <person name="Henner D.J."/>
            <person name="Yang M.Y."/>
        </authorList>
    </citation>
    <scope>NUCLEOTIDE SEQUENCE [GENOMIC DNA]</scope>
</reference>
<reference key="2">
    <citation type="submission" date="1997-03" db="EMBL/GenBank/DDBJ databases">
        <title>A 148 kbp sequence of the region between 35 and 47 degree of the Bacillus subtilis genome.</title>
        <authorList>
            <person name="Kasahara Y."/>
            <person name="Nakai S."/>
            <person name="Lee S."/>
            <person name="Sadaie Y."/>
            <person name="Ogasawara N."/>
        </authorList>
    </citation>
    <scope>NUCLEOTIDE SEQUENCE [GENOMIC DNA]</scope>
    <source>
        <strain>168</strain>
    </source>
</reference>
<reference key="3">
    <citation type="journal article" date="1997" name="Nature">
        <title>The complete genome sequence of the Gram-positive bacterium Bacillus subtilis.</title>
        <authorList>
            <person name="Kunst F."/>
            <person name="Ogasawara N."/>
            <person name="Moszer I."/>
            <person name="Albertini A.M."/>
            <person name="Alloni G."/>
            <person name="Azevedo V."/>
            <person name="Bertero M.G."/>
            <person name="Bessieres P."/>
            <person name="Bolotin A."/>
            <person name="Borchert S."/>
            <person name="Borriss R."/>
            <person name="Boursier L."/>
            <person name="Brans A."/>
            <person name="Braun M."/>
            <person name="Brignell S.C."/>
            <person name="Bron S."/>
            <person name="Brouillet S."/>
            <person name="Bruschi C.V."/>
            <person name="Caldwell B."/>
            <person name="Capuano V."/>
            <person name="Carter N.M."/>
            <person name="Choi S.-K."/>
            <person name="Codani J.-J."/>
            <person name="Connerton I.F."/>
            <person name="Cummings N.J."/>
            <person name="Daniel R.A."/>
            <person name="Denizot F."/>
            <person name="Devine K.M."/>
            <person name="Duesterhoeft A."/>
            <person name="Ehrlich S.D."/>
            <person name="Emmerson P.T."/>
            <person name="Entian K.-D."/>
            <person name="Errington J."/>
            <person name="Fabret C."/>
            <person name="Ferrari E."/>
            <person name="Foulger D."/>
            <person name="Fritz C."/>
            <person name="Fujita M."/>
            <person name="Fujita Y."/>
            <person name="Fuma S."/>
            <person name="Galizzi A."/>
            <person name="Galleron N."/>
            <person name="Ghim S.-Y."/>
            <person name="Glaser P."/>
            <person name="Goffeau A."/>
            <person name="Golightly E.J."/>
            <person name="Grandi G."/>
            <person name="Guiseppi G."/>
            <person name="Guy B.J."/>
            <person name="Haga K."/>
            <person name="Haiech J."/>
            <person name="Harwood C.R."/>
            <person name="Henaut A."/>
            <person name="Hilbert H."/>
            <person name="Holsappel S."/>
            <person name="Hosono S."/>
            <person name="Hullo M.-F."/>
            <person name="Itaya M."/>
            <person name="Jones L.-M."/>
            <person name="Joris B."/>
            <person name="Karamata D."/>
            <person name="Kasahara Y."/>
            <person name="Klaerr-Blanchard M."/>
            <person name="Klein C."/>
            <person name="Kobayashi Y."/>
            <person name="Koetter P."/>
            <person name="Koningstein G."/>
            <person name="Krogh S."/>
            <person name="Kumano M."/>
            <person name="Kurita K."/>
            <person name="Lapidus A."/>
            <person name="Lardinois S."/>
            <person name="Lauber J."/>
            <person name="Lazarevic V."/>
            <person name="Lee S.-M."/>
            <person name="Levine A."/>
            <person name="Liu H."/>
            <person name="Masuda S."/>
            <person name="Mauel C."/>
            <person name="Medigue C."/>
            <person name="Medina N."/>
            <person name="Mellado R.P."/>
            <person name="Mizuno M."/>
            <person name="Moestl D."/>
            <person name="Nakai S."/>
            <person name="Noback M."/>
            <person name="Noone D."/>
            <person name="O'Reilly M."/>
            <person name="Ogawa K."/>
            <person name="Ogiwara A."/>
            <person name="Oudega B."/>
            <person name="Park S.-H."/>
            <person name="Parro V."/>
            <person name="Pohl T.M."/>
            <person name="Portetelle D."/>
            <person name="Porwollik S."/>
            <person name="Prescott A.M."/>
            <person name="Presecan E."/>
            <person name="Pujic P."/>
            <person name="Purnelle B."/>
            <person name="Rapoport G."/>
            <person name="Rey M."/>
            <person name="Reynolds S."/>
            <person name="Rieger M."/>
            <person name="Rivolta C."/>
            <person name="Rocha E."/>
            <person name="Roche B."/>
            <person name="Rose M."/>
            <person name="Sadaie Y."/>
            <person name="Sato T."/>
            <person name="Scanlan E."/>
            <person name="Schleich S."/>
            <person name="Schroeter R."/>
            <person name="Scoffone F."/>
            <person name="Sekiguchi J."/>
            <person name="Sekowska A."/>
            <person name="Seror S.J."/>
            <person name="Serror P."/>
            <person name="Shin B.-S."/>
            <person name="Soldo B."/>
            <person name="Sorokin A."/>
            <person name="Tacconi E."/>
            <person name="Takagi T."/>
            <person name="Takahashi H."/>
            <person name="Takemaru K."/>
            <person name="Takeuchi M."/>
            <person name="Tamakoshi A."/>
            <person name="Tanaka T."/>
            <person name="Terpstra P."/>
            <person name="Tognoni A."/>
            <person name="Tosato V."/>
            <person name="Uchiyama S."/>
            <person name="Vandenbol M."/>
            <person name="Vannier F."/>
            <person name="Vassarotti A."/>
            <person name="Viari A."/>
            <person name="Wambutt R."/>
            <person name="Wedler E."/>
            <person name="Wedler H."/>
            <person name="Weitzenegger T."/>
            <person name="Winters P."/>
            <person name="Wipat A."/>
            <person name="Yamamoto H."/>
            <person name="Yamane K."/>
            <person name="Yasumoto K."/>
            <person name="Yata K."/>
            <person name="Yoshida K."/>
            <person name="Yoshikawa H.-F."/>
            <person name="Zumstein E."/>
            <person name="Yoshikawa H."/>
            <person name="Danchin A."/>
        </authorList>
    </citation>
    <scope>NUCLEOTIDE SEQUENCE [LARGE SCALE GENOMIC DNA]</scope>
    <source>
        <strain>168</strain>
    </source>
</reference>
<comment type="function">
    <text evidence="1">Catalyzes the interconversion of L-alanine and D-alanine. May also act on other amino acids.</text>
</comment>
<comment type="catalytic activity">
    <reaction evidence="1">
        <text>L-alanine = D-alanine</text>
        <dbReference type="Rhea" id="RHEA:20249"/>
        <dbReference type="ChEBI" id="CHEBI:57416"/>
        <dbReference type="ChEBI" id="CHEBI:57972"/>
        <dbReference type="EC" id="5.1.1.1"/>
    </reaction>
</comment>
<comment type="cofactor">
    <cofactor evidence="1">
        <name>pyridoxal 5'-phosphate</name>
        <dbReference type="ChEBI" id="CHEBI:597326"/>
    </cofactor>
</comment>
<comment type="pathway">
    <text evidence="1">Amino-acid biosynthesis; D-alanine biosynthesis; D-alanine from L-alanine: step 1/1.</text>
</comment>
<comment type="similarity">
    <text evidence="1">Belongs to the alanine racemase family.</text>
</comment>
<accession>P10725</accession>
<accession>P96620</accession>
<protein>
    <recommendedName>
        <fullName evidence="1">Alanine racemase 1</fullName>
        <ecNumber evidence="1">5.1.1.1</ecNumber>
    </recommendedName>
</protein>
<keyword id="KW-0413">Isomerase</keyword>
<keyword id="KW-0663">Pyridoxal phosphate</keyword>
<keyword id="KW-1185">Reference proteome</keyword>
<organism>
    <name type="scientific">Bacillus subtilis (strain 168)</name>
    <dbReference type="NCBI Taxonomy" id="224308"/>
    <lineage>
        <taxon>Bacteria</taxon>
        <taxon>Bacillati</taxon>
        <taxon>Bacillota</taxon>
        <taxon>Bacilli</taxon>
        <taxon>Bacillales</taxon>
        <taxon>Bacillaceae</taxon>
        <taxon>Bacillus</taxon>
    </lineage>
</organism>